<comment type="function">
    <text evidence="3 5 7 8 9 10">Metalloproteinase with a rather broad substrate specificity that can degrade fibronectin, laminin, gelatins of type I, III, IV, and V; collagens III, IV, X, and IX, and cartilage proteoglycans. Activates different molecules including growth factors, plasminogen or other matrix metalloproteinases such as MMP9 (PubMed:11029580, PubMed:1371271). Once released into the extracellular matrix (ECM), the inactive pro-enzyme is activated by the plasmin cascade signaling pathway (PubMed:2383557). Also acts intracellularly (PubMed:22265821). For example, in dopaminergic neurons, gets activated by the serine protease HTRA2 upon stress and plays a pivotal role in DA neuronal degeneration by mediating microglial activation and alpha-synuclein/SNCA cleavage (PubMed:21330369). In addition, plays a role in immune response and possesses antiviral activity against various viruses such as vesicular stomatitis virus, influenza A virus (H1N1) and human herpes virus 1 (PubMed:35940311). Mechanistically, translocates from the cytoplasm into the cell nucleus upon virus infection to influence NF-kappa-B activities (PubMed:35940311).</text>
</comment>
<comment type="catalytic activity">
    <reaction evidence="5 7">
        <text>Preferential cleavage where P1', P2' and P3' are hydrophobic residues.</text>
        <dbReference type="EC" id="3.4.24.17"/>
    </reaction>
</comment>
<comment type="cofactor">
    <cofactor>
        <name>Ca(2+)</name>
        <dbReference type="ChEBI" id="CHEBI:29108"/>
    </cofactor>
    <text>Binds 4 Ca(2+) ions per subunit.</text>
</comment>
<comment type="cofactor">
    <cofactor>
        <name>Zn(2+)</name>
        <dbReference type="ChEBI" id="CHEBI:29105"/>
    </cofactor>
    <text>Binds 2 Zn(2+) ions per subunit.</text>
</comment>
<comment type="activity regulation">
    <text evidence="8">Enzymatic activity is activated by HTRA2 in dopaminergic cells upon mitochondrial stress.</text>
</comment>
<comment type="interaction">
    <interactant intactId="EBI-6957351">
        <id>P08254</id>
    </interactant>
    <interactant intactId="EBI-748397">
        <id>P50222</id>
        <label>MEOX2</label>
    </interactant>
    <organismsDiffer>false</organismsDiffer>
    <experiments>3</experiments>
</comment>
<comment type="subcellular location">
    <subcellularLocation>
        <location>Secreted</location>
        <location>Extracellular space</location>
        <location>Extracellular matrix</location>
    </subcellularLocation>
    <subcellularLocation>
        <location evidence="10">Nucleus</location>
    </subcellularLocation>
    <subcellularLocation>
        <location evidence="10">Cytoplasm</location>
    </subcellularLocation>
</comment>
<comment type="domain">
    <text>The conserved cysteine present in the cysteine-switch motif binds the catalytic zinc ion, thus inhibiting the enzyme. The dissociation of the cysteine from the zinc ion upon the activation-peptide release activates the enzyme.</text>
</comment>
<comment type="PTM">
    <text evidence="8">Directly cleaved by HTRA2 to produce active form.</text>
</comment>
<comment type="disease" evidence="4 11">
    <disease id="DI-03346">
        <name>Coronary heart disease 6</name>
        <acronym>CHDS6</acronym>
        <description>A multifactorial disease characterized by an imbalance between myocardial functional requirements and the capacity of the coronary vessels to supply sufficient blood flow. Decreased capacity of the coronary vessels is often associated with thickening and loss of elasticity of the coronary arteries.</description>
        <dbReference type="MIM" id="614466"/>
    </disease>
    <text>Disease susceptibility is associated with variants affecting the gene represented in this entry. A polymorphism in the MMP3 promoter region is associated with the risk of coronary heart disease and myocardial infarction, due to lower MMP3 proteolytic activity and higher extracellular matrix deposition in atherosclerotic lesions.</text>
</comment>
<comment type="similarity">
    <text evidence="15">Belongs to the peptidase M10A family.</text>
</comment>
<reference key="1">
    <citation type="journal article" date="1988" name="J. Biol. Chem.">
        <title>The complete primary structure of human matrix metalloproteinase-3. Identity with stromelysin.</title>
        <authorList>
            <person name="Saus J."/>
            <person name="Quinones S."/>
            <person name="Otani Y."/>
            <person name="Nagase H."/>
            <person name="Harris E.D. Jr."/>
            <person name="Kurkinen M."/>
        </authorList>
    </citation>
    <scope>NUCLEOTIDE SEQUENCE [MRNA]</scope>
    <scope>PROTEIN SEQUENCE OF 18-24</scope>
</reference>
<reference key="2">
    <citation type="journal article" date="1986" name="Biochem. J.">
        <title>Comparison of human stromelysin and collagenase by cloning and sequence analysis.</title>
        <authorList>
            <person name="Whitham S.E."/>
            <person name="Murphy G."/>
            <person name="Angel P."/>
            <person name="Rahmsdorf H.J."/>
            <person name="Smith B."/>
            <person name="Lyons A."/>
            <person name="Harris T.J.R."/>
            <person name="Reynolds J.J."/>
            <person name="Herrlich P."/>
            <person name="Docherty A.J.P."/>
        </authorList>
    </citation>
    <scope>NUCLEOTIDE SEQUENCE [MRNA]</scope>
    <source>
        <tissue>Fibroblast</tissue>
    </source>
</reference>
<reference key="3">
    <citation type="journal article" date="1987" name="Proc. Natl. Acad. Sci. U.S.A.">
        <title>Human skin fibroblast stromelysin: structure, glycosylation, substrate specificity, and differential expression in normal and tumorigenic cells.</title>
        <authorList>
            <person name="Wilhelm S.M."/>
            <person name="Collier I.E."/>
            <person name="Kronberger A."/>
            <person name="Eisen A.Z."/>
            <person name="Marmer B.L."/>
            <person name="Grant G.A."/>
            <person name="Bauer E.A."/>
            <person name="Goldberg G.I."/>
        </authorList>
    </citation>
    <scope>NUCLEOTIDE SEQUENCE [GENOMIC DNA]</scope>
</reference>
<reference key="4">
    <citation type="submission" date="1996-12" db="EMBL/GenBank/DDBJ databases">
        <title>Three matrix metalloproteinases on 81kb of P1 insert.</title>
        <authorList>
            <person name="Lin D."/>
            <person name="Duncan M."/>
            <person name="Allen E."/>
            <person name="Araujo R."/>
            <person name="Aparicio A."/>
            <person name="Chai A."/>
            <person name="Chung E."/>
            <person name="Davis K."/>
            <person name="Federspiel N."/>
            <person name="Hyman R."/>
            <person name="Kalman S."/>
            <person name="Komp C."/>
            <person name="Kurdi O."/>
            <person name="Lashkari D."/>
            <person name="Lew H."/>
            <person name="Namath A."/>
            <person name="Oefner P."/>
            <person name="Roberts D."/>
            <person name="Heller R."/>
            <person name="Davis R.W."/>
        </authorList>
    </citation>
    <scope>NUCLEOTIDE SEQUENCE [GENOMIC DNA]</scope>
</reference>
<reference key="5">
    <citation type="journal article" date="2004" name="Nat. Genet.">
        <title>Complete sequencing and characterization of 21,243 full-length human cDNAs.</title>
        <authorList>
            <person name="Ota T."/>
            <person name="Suzuki Y."/>
            <person name="Nishikawa T."/>
            <person name="Otsuki T."/>
            <person name="Sugiyama T."/>
            <person name="Irie R."/>
            <person name="Wakamatsu A."/>
            <person name="Hayashi K."/>
            <person name="Sato H."/>
            <person name="Nagai K."/>
            <person name="Kimura K."/>
            <person name="Makita H."/>
            <person name="Sekine M."/>
            <person name="Obayashi M."/>
            <person name="Nishi T."/>
            <person name="Shibahara T."/>
            <person name="Tanaka T."/>
            <person name="Ishii S."/>
            <person name="Yamamoto J."/>
            <person name="Saito K."/>
            <person name="Kawai Y."/>
            <person name="Isono Y."/>
            <person name="Nakamura Y."/>
            <person name="Nagahari K."/>
            <person name="Murakami K."/>
            <person name="Yasuda T."/>
            <person name="Iwayanagi T."/>
            <person name="Wagatsuma M."/>
            <person name="Shiratori A."/>
            <person name="Sudo H."/>
            <person name="Hosoiri T."/>
            <person name="Kaku Y."/>
            <person name="Kodaira H."/>
            <person name="Kondo H."/>
            <person name="Sugawara M."/>
            <person name="Takahashi M."/>
            <person name="Kanda K."/>
            <person name="Yokoi T."/>
            <person name="Furuya T."/>
            <person name="Kikkawa E."/>
            <person name="Omura Y."/>
            <person name="Abe K."/>
            <person name="Kamihara K."/>
            <person name="Katsuta N."/>
            <person name="Sato K."/>
            <person name="Tanikawa M."/>
            <person name="Yamazaki M."/>
            <person name="Ninomiya K."/>
            <person name="Ishibashi T."/>
            <person name="Yamashita H."/>
            <person name="Murakawa K."/>
            <person name="Fujimori K."/>
            <person name="Tanai H."/>
            <person name="Kimata M."/>
            <person name="Watanabe M."/>
            <person name="Hiraoka S."/>
            <person name="Chiba Y."/>
            <person name="Ishida S."/>
            <person name="Ono Y."/>
            <person name="Takiguchi S."/>
            <person name="Watanabe S."/>
            <person name="Yosida M."/>
            <person name="Hotuta T."/>
            <person name="Kusano J."/>
            <person name="Kanehori K."/>
            <person name="Takahashi-Fujii A."/>
            <person name="Hara H."/>
            <person name="Tanase T.-O."/>
            <person name="Nomura Y."/>
            <person name="Togiya S."/>
            <person name="Komai F."/>
            <person name="Hara R."/>
            <person name="Takeuchi K."/>
            <person name="Arita M."/>
            <person name="Imose N."/>
            <person name="Musashino K."/>
            <person name="Yuuki H."/>
            <person name="Oshima A."/>
            <person name="Sasaki N."/>
            <person name="Aotsuka S."/>
            <person name="Yoshikawa Y."/>
            <person name="Matsunawa H."/>
            <person name="Ichihara T."/>
            <person name="Shiohata N."/>
            <person name="Sano S."/>
            <person name="Moriya S."/>
            <person name="Momiyama H."/>
            <person name="Satoh N."/>
            <person name="Takami S."/>
            <person name="Terashima Y."/>
            <person name="Suzuki O."/>
            <person name="Nakagawa S."/>
            <person name="Senoh A."/>
            <person name="Mizoguchi H."/>
            <person name="Goto Y."/>
            <person name="Shimizu F."/>
            <person name="Wakebe H."/>
            <person name="Hishigaki H."/>
            <person name="Watanabe T."/>
            <person name="Sugiyama A."/>
            <person name="Takemoto M."/>
            <person name="Kawakami B."/>
            <person name="Yamazaki M."/>
            <person name="Watanabe K."/>
            <person name="Kumagai A."/>
            <person name="Itakura S."/>
            <person name="Fukuzumi Y."/>
            <person name="Fujimori Y."/>
            <person name="Komiyama M."/>
            <person name="Tashiro H."/>
            <person name="Tanigami A."/>
            <person name="Fujiwara T."/>
            <person name="Ono T."/>
            <person name="Yamada K."/>
            <person name="Fujii Y."/>
            <person name="Ozaki K."/>
            <person name="Hirao M."/>
            <person name="Ohmori Y."/>
            <person name="Kawabata A."/>
            <person name="Hikiji T."/>
            <person name="Kobatake N."/>
            <person name="Inagaki H."/>
            <person name="Ikema Y."/>
            <person name="Okamoto S."/>
            <person name="Okitani R."/>
            <person name="Kawakami T."/>
            <person name="Noguchi S."/>
            <person name="Itoh T."/>
            <person name="Shigeta K."/>
            <person name="Senba T."/>
            <person name="Matsumura K."/>
            <person name="Nakajima Y."/>
            <person name="Mizuno T."/>
            <person name="Morinaga M."/>
            <person name="Sasaki M."/>
            <person name="Togashi T."/>
            <person name="Oyama M."/>
            <person name="Hata H."/>
            <person name="Watanabe M."/>
            <person name="Komatsu T."/>
            <person name="Mizushima-Sugano J."/>
            <person name="Satoh T."/>
            <person name="Shirai Y."/>
            <person name="Takahashi Y."/>
            <person name="Nakagawa K."/>
            <person name="Okumura K."/>
            <person name="Nagase T."/>
            <person name="Nomura N."/>
            <person name="Kikuchi H."/>
            <person name="Masuho Y."/>
            <person name="Yamashita R."/>
            <person name="Nakai K."/>
            <person name="Yada T."/>
            <person name="Nakamura Y."/>
            <person name="Ohara O."/>
            <person name="Isogai T."/>
            <person name="Sugano S."/>
        </authorList>
    </citation>
    <scope>NUCLEOTIDE SEQUENCE [LARGE SCALE MRNA]</scope>
    <source>
        <tissue>Synovium</tissue>
    </source>
</reference>
<reference key="6">
    <citation type="submission" date="2005-04" db="EMBL/GenBank/DDBJ databases">
        <authorList>
            <person name="Suzuki Y."/>
            <person name="Sugano S."/>
            <person name="Totoki Y."/>
            <person name="Toyoda A."/>
            <person name="Takeda T."/>
            <person name="Sakaki Y."/>
            <person name="Tanaka A."/>
            <person name="Yokoyama S."/>
        </authorList>
    </citation>
    <scope>NUCLEOTIDE SEQUENCE [LARGE SCALE MRNA]</scope>
    <scope>VARIANT GLU-45</scope>
    <source>
        <tissue>Synovium</tissue>
    </source>
</reference>
<reference key="7">
    <citation type="submission" date="2001-08" db="EMBL/GenBank/DDBJ databases">
        <authorList>
            <consortium name="SeattleSNPs variation discovery resource"/>
        </authorList>
    </citation>
    <scope>NUCLEOTIDE SEQUENCE [GENOMIC DNA]</scope>
    <scope>VARIANT GLU-45</scope>
</reference>
<reference key="8">
    <citation type="submission" date="2005-07" db="EMBL/GenBank/DDBJ databases">
        <authorList>
            <person name="Mural R.J."/>
            <person name="Istrail S."/>
            <person name="Sutton G.G."/>
            <person name="Florea L."/>
            <person name="Halpern A.L."/>
            <person name="Mobarry C.M."/>
            <person name="Lippert R."/>
            <person name="Walenz B."/>
            <person name="Shatkay H."/>
            <person name="Dew I."/>
            <person name="Miller J.R."/>
            <person name="Flanigan M.J."/>
            <person name="Edwards N.J."/>
            <person name="Bolanos R."/>
            <person name="Fasulo D."/>
            <person name="Halldorsson B.V."/>
            <person name="Hannenhalli S."/>
            <person name="Turner R."/>
            <person name="Yooseph S."/>
            <person name="Lu F."/>
            <person name="Nusskern D.R."/>
            <person name="Shue B.C."/>
            <person name="Zheng X.H."/>
            <person name="Zhong F."/>
            <person name="Delcher A.L."/>
            <person name="Huson D.H."/>
            <person name="Kravitz S.A."/>
            <person name="Mouchard L."/>
            <person name="Reinert K."/>
            <person name="Remington K.A."/>
            <person name="Clark A.G."/>
            <person name="Waterman M.S."/>
            <person name="Eichler E.E."/>
            <person name="Adams M.D."/>
            <person name="Hunkapiller M.W."/>
            <person name="Myers E.W."/>
            <person name="Venter J.C."/>
        </authorList>
    </citation>
    <scope>NUCLEOTIDE SEQUENCE [LARGE SCALE GENOMIC DNA]</scope>
</reference>
<reference key="9">
    <citation type="journal article" date="2004" name="Genome Res.">
        <title>The status, quality, and expansion of the NIH full-length cDNA project: the Mammalian Gene Collection (MGC).</title>
        <authorList>
            <consortium name="The MGC Project Team"/>
        </authorList>
    </citation>
    <scope>NUCLEOTIDE SEQUENCE [LARGE SCALE MRNA]</scope>
    <scope>VARIANT GLU-45</scope>
    <source>
        <tissue>Lung</tissue>
    </source>
</reference>
<reference key="10">
    <citation type="journal article" date="1990" name="Biochemistry">
        <title>Stepwise activation mechanisms of the precursor of matrix metalloproteinase 3 (stromelysin) by proteinases and (4-aminophenyl)mercuric acetate.</title>
        <authorList>
            <person name="Nagase H."/>
            <person name="Enghild J.J."/>
            <person name="Suzuki K."/>
            <person name="Salvesen G."/>
        </authorList>
    </citation>
    <scope>ZYMOGEN ACTIVATION</scope>
    <scope>FUNCTION</scope>
</reference>
<reference key="11">
    <citation type="journal article" date="1992" name="J. Biol. Chem.">
        <title>Matrix metalloproteinase 3 (stromelysin) activates the precursor for the human matrix metalloproteinase 9.</title>
        <authorList>
            <person name="Ogata Y."/>
            <person name="Enghild J.J."/>
            <person name="Nagase H."/>
        </authorList>
    </citation>
    <scope>FUNCTION</scope>
    <scope>CATALYTIC ACTIVITY</scope>
</reference>
<reference key="12">
    <citation type="journal article" date="1996" name="J. Biol. Chem.">
        <title>Progression of coronary atherosclerosis is associated with a common genetic variant of the human stromelysin-1 promoter which results in reduced gene expression.</title>
        <authorList>
            <person name="Ye S."/>
            <person name="Eriksson P."/>
            <person name="Hamsten A."/>
            <person name="Kurkinen M."/>
            <person name="Humphries S.E."/>
            <person name="Henney A.M."/>
        </authorList>
    </citation>
    <scope>INVOLVEMENT IN CHDS6</scope>
</reference>
<reference key="13">
    <citation type="journal article" date="2000" name="Eur. J. Biochem.">
        <title>Prostromelysin-1 (proMMP-3) stimulates plasminogen activation by tissue-type plasminogen activator.</title>
        <authorList>
            <person name="Arza B."/>
            <person name="Hoylaerts M.F."/>
            <person name="Felez J."/>
            <person name="Collen D."/>
            <person name="Lijnen H.R."/>
        </authorList>
    </citation>
    <scope>FUNCTION</scope>
</reference>
<reference key="14">
    <citation type="journal article" date="2002" name="N. Engl. J. Med.">
        <title>Prediction of the risk of myocardial infarction from polymorphisms in candidate genes.</title>
        <authorList>
            <person name="Yamada Y."/>
            <person name="Izawa H."/>
            <person name="Ichihara S."/>
            <person name="Takatsu F."/>
            <person name="Ishihara H."/>
            <person name="Hirayama H."/>
            <person name="Sone T."/>
            <person name="Tanaka M."/>
            <person name="Yokota M."/>
        </authorList>
    </citation>
    <scope>INVOLVEMENT IN CHDS6</scope>
</reference>
<reference key="15">
    <citation type="journal article" date="2011" name="J. Biol. Chem.">
        <title>Role of matrix metalloproteinase 3-mediated alpha-synuclein cleavage in dopaminergic cell death.</title>
        <authorList>
            <person name="Choi D.H."/>
            <person name="Kim Y.J."/>
            <person name="Kim Y.G."/>
            <person name="Joh T.H."/>
            <person name="Beal M.F."/>
            <person name="Kim Y.S."/>
        </authorList>
    </citation>
    <scope>FUNCTION</scope>
    <scope>SUBCELLULAR LOCATION</scope>
    <scope>CATALYTIC ACTIVITY</scope>
</reference>
<reference key="16">
    <citation type="journal article" date="2012" name="Neurochem. Int.">
        <title>Matrix metalloproteinase-3 is activated by HtrA2/Omi in dopaminergic cells: relevance to Parkinson's disease.</title>
        <authorList>
            <person name="Shin E.J."/>
            <person name="Kim E.M."/>
            <person name="Lee J.A."/>
            <person name="Rhim H."/>
            <person name="Hwang O."/>
        </authorList>
    </citation>
    <scope>FUNCTION</scope>
    <scope>ACTIVITY REGULATION</scope>
</reference>
<reference key="17">
    <citation type="journal article" date="2022" name="Antiviral Res.">
        <title>Matrix metalloproteinase 3 restricts viral infection by enhancing host antiviral immunity.</title>
        <authorList>
            <person name="Feng T."/>
            <person name="Tong H."/>
            <person name="Ming Z."/>
            <person name="Deng L."/>
            <person name="Liu J."/>
            <person name="Wu J."/>
            <person name="Chen Z."/>
            <person name="Yan Y."/>
            <person name="Dai J."/>
        </authorList>
    </citation>
    <scope>FUNCTION</scope>
    <scope>SUBCELLULAR LOCATION</scope>
</reference>
<reference key="18">
    <citation type="journal article" date="1994" name="Nat. Struct. Biol.">
        <title>The NMR structure of the inhibited catalytic domain of human stromelysin-1.</title>
        <authorList>
            <person name="Gooley P.R."/>
            <person name="O'Connell J.F."/>
            <person name="Marcy A.I."/>
            <person name="Cuca G.C."/>
            <person name="Salowe S.P."/>
            <person name="Bush B.L."/>
            <person name="Hermes J.D."/>
            <person name="Esser C.K."/>
            <person name="Hagmann W.K."/>
            <person name="Springer J.P."/>
            <person name="Johnson B.A."/>
        </authorList>
    </citation>
    <scope>STRUCTURE BY NMR OF CATALYTIC DOMAIN</scope>
</reference>
<reference key="19">
    <citation type="journal article" date="1998" name="Protein Sci.">
        <title>Solution structures of stromelysin complexed to thiadiazole inhibitors.</title>
        <authorList>
            <person name="Stockman B.J."/>
            <person name="Waldon D.J."/>
            <person name="Gates J.A."/>
            <person name="Scahill T.A."/>
            <person name="Kloosterman D.A."/>
            <person name="Mizsak S.A."/>
            <person name="Jacobsen E.J."/>
            <person name="Belonga K.L."/>
            <person name="Mitchell M.A."/>
            <person name="Mao B."/>
            <person name="Petke J.D."/>
            <person name="Goodman L."/>
            <person name="Powers E.A."/>
            <person name="Ledbetter S.R."/>
            <person name="Kaytes P.S."/>
            <person name="Vogeli G."/>
            <person name="Marshall V.P."/>
            <person name="Petzold G.L."/>
            <person name="Poorman R.A."/>
        </authorList>
    </citation>
    <scope>STRUCTURE BY NMR OF 100-267</scope>
</reference>
<reference key="20">
    <citation type="journal article" date="1995" name="Protein Sci.">
        <title>Stromelysin-1: three-dimensional structure of the inhibited catalytic domain and of the C-truncated proenzyme.</title>
        <authorList>
            <person name="Becker J.W."/>
            <person name="Marcy A.I."/>
            <person name="Rokosz L.L."/>
            <person name="Axel M.G."/>
            <person name="Burbaum J.J."/>
            <person name="Fitzgerald P.M.D."/>
            <person name="Cameron P.M."/>
            <person name="Esser C.K."/>
            <person name="Hagmann W.K."/>
            <person name="Hermes J.D."/>
            <person name="Springer J.P."/>
        </authorList>
    </citation>
    <scope>X-RAY CRYSTALLOGRAPHY (1.9 ANGSTROMS) OF 18-272</scope>
</reference>
<reference key="21">
    <citation type="journal article" date="1996" name="Structure">
        <title>X-ray structure of a hydroxamate inhibitor complex of stromelysin catalytic domain and its comparison with members of the zinc metalloproteinase superfamily.</title>
        <authorList>
            <person name="Dhanaraj V."/>
            <person name="Ye Q.-Z."/>
            <person name="Johnson L.L."/>
            <person name="Hupe D.J."/>
            <person name="Otwine D.F."/>
            <person name="Dunbar J.B. Jr."/>
            <person name="Rubin J.R."/>
            <person name="Pavlovsky A."/>
            <person name="Humblet C."/>
            <person name="Blundell T.L."/>
        </authorList>
    </citation>
    <scope>X-RAY CRYSTALLOGRAPHY (2.0 ANGSTROMS) OF 100-266</scope>
</reference>
<reference key="22">
    <citation type="journal article" date="1997" name="J. Med. Chem.">
        <title>Inhibition of stromelysin-1 (MMP-3) by P1'-biphenylylethyl carboxyalkyl dipeptides.</title>
        <authorList>
            <person name="Esser C.K."/>
            <person name="Bugianesi R.L."/>
            <person name="Caldwell C.G."/>
            <person name="Chapman K.T."/>
            <person name="Durette P.L."/>
            <person name="Girotra N.N."/>
            <person name="Kopka I.E."/>
            <person name="Lanza T.J."/>
            <person name="Levorse D.A."/>
            <person name="Maccoss M."/>
            <person name="Owens K.A."/>
            <person name="Ponpipom M.M."/>
            <person name="Simeone J.P."/>
            <person name="Harrison R.K."/>
            <person name="Niedzwiecki L."/>
            <person name="Becker J.W."/>
            <person name="Marcy A.I."/>
            <person name="Axel M.G."/>
            <person name="Christen A.J."/>
            <person name="McDonnell J."/>
            <person name="Moore V.L."/>
            <person name="Olszewski J.M."/>
            <person name="Saphos C."/>
            <person name="Visco D.M."/>
            <person name="Shen F."/>
            <person name="Colletti A."/>
            <person name="Kriter P.A."/>
            <person name="Hagmann W.K."/>
        </authorList>
    </citation>
    <scope>X-RAY CRYSTALLOGRAPHY (1.7 ANGSTROMS) OF 105-264</scope>
</reference>
<reference key="23">
    <citation type="journal article" date="1997" name="Nature">
        <title>Mechanism of inhibition of the human matrix metalloproteinase stromelysin-1 by TIMP-1.</title>
        <authorList>
            <person name="Gomis-Rueth F.-X."/>
            <person name="Maskos K."/>
            <person name="Betz M."/>
            <person name="Bergner A."/>
            <person name="Huber R."/>
            <person name="Suzuki K."/>
            <person name="Yoshida N."/>
            <person name="Nagase H."/>
            <person name="Brew K."/>
            <person name="Bourenkov G.P."/>
            <person name="Bartunik H."/>
            <person name="Bode W."/>
        </authorList>
    </citation>
    <scope>X-RAY CRYSTALLOGRAPHY (2.8 ANGSTROMS) OF 100-267 IN COMPLEX WITH TIMP1</scope>
</reference>
<reference key="24">
    <citation type="journal article" date="1998" name="Protein Sci.">
        <title>Structural characterizations of nonpeptidic thiadiazole inhibitors of matrix metalloproteinases reveal the basis for stromelysin selectivity.</title>
        <authorList>
            <person name="Finzel B.C."/>
            <person name="Baldwin E.T."/>
            <person name="Bryant G.L. Jr."/>
            <person name="Hess G.F."/>
            <person name="Wilks J.W."/>
            <person name="Trepod C.M."/>
            <person name="Mott J.E."/>
            <person name="Marshall V.P."/>
            <person name="Petzold G.L."/>
            <person name="Poorman R.A."/>
            <person name="O'Sullivan T.J."/>
            <person name="Schostarez H.J."/>
            <person name="Mitchell M.A."/>
        </authorList>
    </citation>
    <scope>X-RAY CRYSTALLOGRAPHY (1.8 ANGSTROMS) OF 100-264</scope>
</reference>
<reference key="25">
    <citation type="journal article" date="1999" name="J. Mol. Biol.">
        <title>Crystal structure of the stromelysin catalytic domain at 2.0-A resolution: inhibitor-induced conformational changes.</title>
        <authorList>
            <person name="Chen L."/>
            <person name="Rydel T.J."/>
            <person name="Gu F."/>
            <person name="Dunaway C.M."/>
            <person name="Pikul S."/>
            <person name="Dunham K.M."/>
            <person name="Barnett B.L."/>
        </authorList>
    </citation>
    <scope>X-RAY CRYSTALLOGRAPHY (2.0 ANGSTROMS) OF 100-272</scope>
</reference>
<reference key="26">
    <citation type="journal article" date="1999" name="Protein Sci.">
        <title>X-ray structure of human stromelysin catalytic domain complexed with nonpeptide inhibitors: implications for inhibitor selectivity.</title>
        <authorList>
            <person name="Pavlovsky A.G."/>
            <person name="Williams M.G."/>
            <person name="Ye Q.-Z."/>
            <person name="Ortwine D.F."/>
            <person name="Purchase C.F. II"/>
            <person name="White A.D."/>
            <person name="Dhanaraj V."/>
            <person name="Roth B.D."/>
            <person name="Johnson L.L."/>
            <person name="Hupe D."/>
            <person name="Humblet C."/>
            <person name="Blundell T.L."/>
        </authorList>
    </citation>
    <scope>X-RAY CRYSTALLOGRAPHY (1.8 ANGSTROMS) OF 100-267</scope>
</reference>
<reference key="27">
    <citation type="journal article" date="1998" name="Biochemistry">
        <title>Solution structure of the catalytic domain of human stromelysin-1 complexed to a potent, nonpeptidic inhibitor.</title>
        <authorList>
            <person name="Li Y.C."/>
            <person name="Zhang X."/>
            <person name="Melton R."/>
            <person name="Ganu V."/>
            <person name="Gonnella N.C."/>
        </authorList>
    </citation>
    <scope>STRUCTURE BY NMR OF 100-272</scope>
</reference>
<evidence type="ECO:0000250" key="1"/>
<evidence type="ECO:0000256" key="2">
    <source>
        <dbReference type="SAM" id="MobiDB-lite"/>
    </source>
</evidence>
<evidence type="ECO:0000269" key="3">
    <source>
    </source>
</evidence>
<evidence type="ECO:0000269" key="4">
    <source>
    </source>
</evidence>
<evidence type="ECO:0000269" key="5">
    <source>
    </source>
</evidence>
<evidence type="ECO:0000269" key="6">
    <source>
    </source>
</evidence>
<evidence type="ECO:0000269" key="7">
    <source>
    </source>
</evidence>
<evidence type="ECO:0000269" key="8">
    <source>
    </source>
</evidence>
<evidence type="ECO:0000269" key="9">
    <source>
    </source>
</evidence>
<evidence type="ECO:0000269" key="10">
    <source>
    </source>
</evidence>
<evidence type="ECO:0000269" key="11">
    <source>
    </source>
</evidence>
<evidence type="ECO:0000269" key="12">
    <source>
    </source>
</evidence>
<evidence type="ECO:0000269" key="13">
    <source ref="6"/>
</evidence>
<evidence type="ECO:0000269" key="14">
    <source ref="7"/>
</evidence>
<evidence type="ECO:0000305" key="15"/>
<evidence type="ECO:0000305" key="16">
    <source>
    </source>
</evidence>
<evidence type="ECO:0007829" key="17">
    <source>
        <dbReference type="PDB" id="1CAQ"/>
    </source>
</evidence>
<evidence type="ECO:0007829" key="18">
    <source>
        <dbReference type="PDB" id="1CIZ"/>
    </source>
</evidence>
<evidence type="ECO:0007829" key="19">
    <source>
        <dbReference type="PDB" id="1HY7"/>
    </source>
</evidence>
<evidence type="ECO:0007829" key="20">
    <source>
        <dbReference type="PDB" id="1SLM"/>
    </source>
</evidence>
<evidence type="ECO:0007829" key="21">
    <source>
        <dbReference type="PDB" id="1USN"/>
    </source>
</evidence>
<evidence type="ECO:0007829" key="22">
    <source>
        <dbReference type="PDB" id="2SRT"/>
    </source>
</evidence>
<evidence type="ECO:0007829" key="23">
    <source>
        <dbReference type="PDB" id="4JA1"/>
    </source>
</evidence>
<evidence type="ECO:0007829" key="24">
    <source>
        <dbReference type="PDB" id="7S7L"/>
    </source>
</evidence>
<keyword id="KW-0002">3D-structure</keyword>
<keyword id="KW-0106">Calcium</keyword>
<keyword id="KW-0177">Collagen degradation</keyword>
<keyword id="KW-0963">Cytoplasm</keyword>
<keyword id="KW-0903">Direct protein sequencing</keyword>
<keyword id="KW-1015">Disulfide bond</keyword>
<keyword id="KW-0272">Extracellular matrix</keyword>
<keyword id="KW-0378">Hydrolase</keyword>
<keyword id="KW-0391">Immunity</keyword>
<keyword id="KW-0399">Innate immunity</keyword>
<keyword id="KW-0479">Metal-binding</keyword>
<keyword id="KW-0482">Metalloprotease</keyword>
<keyword id="KW-0539">Nucleus</keyword>
<keyword id="KW-0645">Protease</keyword>
<keyword id="KW-1267">Proteomics identification</keyword>
<keyword id="KW-1185">Reference proteome</keyword>
<keyword id="KW-0677">Repeat</keyword>
<keyword id="KW-0964">Secreted</keyword>
<keyword id="KW-0732">Signal</keyword>
<keyword id="KW-0862">Zinc</keyword>
<keyword id="KW-0865">Zymogen</keyword>
<sequence length="477" mass="53977">MKSLPILLLLCVAVCSAYPLDGAARGEDTSMNLVQKYLENYYDLKKDVKQFVRRKDSGPVVKKIREMQKFLGLEVTGKLDSDTLEVMRKPRCGVPDVGHFRTFPGIPKWRKTHLTYRIVNYTPDLPKDAVDSAVEKALKVWEEVTPLTFSRLYEGEADIMISFAVREHGDFYPFDGPGNVLAHAYAPGPGINGDAHFDDDEQWTKDTTGTNLFLVAAHEIGHSLGLFHSANTEALMYPLYHSLTDLTRFRLSQDDINGIQSLYGPPPDSPETPLVPTEPVPPEPGTPANCDPALSFDAVSTLRGEILIFKDRHFWRKSLRKLEPELHLISSFWPSLPSGVDAAYEVTSKDLVFIFKGNQFWAIRGNEVRAGYPRGIHTLGFPPTVRKIDAAISDKEKNKTYFFVEDKYWRFDEKRNSMEPGFPKQIAEDFPGIDSKIDAVFEEFGFFYFFTGSSQLEFDPNAKKVTHTLKSNSWLNC</sequence>
<proteinExistence type="evidence at protein level"/>
<dbReference type="EC" id="3.4.24.17" evidence="5 7"/>
<dbReference type="EMBL" id="X05232">
    <property type="protein sequence ID" value="CAA28859.1"/>
    <property type="molecule type" value="mRNA"/>
</dbReference>
<dbReference type="EMBL" id="J03209">
    <property type="protein sequence ID" value="AAA36321.1"/>
    <property type="molecule type" value="mRNA"/>
</dbReference>
<dbReference type="EMBL" id="U78045">
    <property type="protein sequence ID" value="AAB36942.1"/>
    <property type="molecule type" value="Genomic_DNA"/>
</dbReference>
<dbReference type="EMBL" id="AK223283">
    <property type="protein sequence ID" value="BAD97003.1"/>
    <property type="molecule type" value="mRNA"/>
</dbReference>
<dbReference type="EMBL" id="AK223291">
    <property type="protein sequence ID" value="BAD97011.1"/>
    <property type="molecule type" value="mRNA"/>
</dbReference>
<dbReference type="EMBL" id="AK313310">
    <property type="protein sequence ID" value="BAG36115.1"/>
    <property type="molecule type" value="mRNA"/>
</dbReference>
<dbReference type="EMBL" id="AF405705">
    <property type="protein sequence ID" value="AAK95247.1"/>
    <property type="molecule type" value="Genomic_DNA"/>
</dbReference>
<dbReference type="EMBL" id="CH471065">
    <property type="protein sequence ID" value="EAW67032.1"/>
    <property type="molecule type" value="Genomic_DNA"/>
</dbReference>
<dbReference type="EMBL" id="BC069676">
    <property type="protein sequence ID" value="AAH69676.1"/>
    <property type="molecule type" value="mRNA"/>
</dbReference>
<dbReference type="EMBL" id="BC069716">
    <property type="protein sequence ID" value="AAH69716.1"/>
    <property type="molecule type" value="mRNA"/>
</dbReference>
<dbReference type="EMBL" id="BC074815">
    <property type="protein sequence ID" value="AAH74815.1"/>
    <property type="molecule type" value="mRNA"/>
</dbReference>
<dbReference type="EMBL" id="BC074869">
    <property type="protein sequence ID" value="AAH74869.1"/>
    <property type="molecule type" value="mRNA"/>
</dbReference>
<dbReference type="EMBL" id="BC105954">
    <property type="protein sequence ID" value="AAI05955.1"/>
    <property type="molecule type" value="mRNA"/>
</dbReference>
<dbReference type="EMBL" id="BC107490">
    <property type="protein sequence ID" value="AAI07491.1"/>
    <property type="molecule type" value="mRNA"/>
</dbReference>
<dbReference type="EMBL" id="BC107491">
    <property type="protein sequence ID" value="AAI07492.1"/>
    <property type="molecule type" value="mRNA"/>
</dbReference>
<dbReference type="CCDS" id="CCDS8323.1"/>
<dbReference type="PIR" id="A28156">
    <property type="entry name" value="KCHUS1"/>
</dbReference>
<dbReference type="RefSeq" id="NP_002413.1">
    <property type="nucleotide sequence ID" value="NM_002422.5"/>
</dbReference>
<dbReference type="PDB" id="1B3D">
    <property type="method" value="X-ray"/>
    <property type="resolution" value="2.30 A"/>
    <property type="chains" value="A/B=100-272"/>
</dbReference>
<dbReference type="PDB" id="1B8Y">
    <property type="method" value="X-ray"/>
    <property type="resolution" value="2.00 A"/>
    <property type="chains" value="A=100-266"/>
</dbReference>
<dbReference type="PDB" id="1BIW">
    <property type="method" value="X-ray"/>
    <property type="resolution" value="2.50 A"/>
    <property type="chains" value="A/B=100-272"/>
</dbReference>
<dbReference type="PDB" id="1BM6">
    <property type="method" value="NMR"/>
    <property type="chains" value="A=100-272"/>
</dbReference>
<dbReference type="PDB" id="1BQO">
    <property type="method" value="X-ray"/>
    <property type="resolution" value="2.30 A"/>
    <property type="chains" value="A/B=100-272"/>
</dbReference>
<dbReference type="PDB" id="1C3I">
    <property type="method" value="X-ray"/>
    <property type="resolution" value="1.83 A"/>
    <property type="chains" value="A/B=100-272"/>
</dbReference>
<dbReference type="PDB" id="1C8T">
    <property type="method" value="X-ray"/>
    <property type="resolution" value="2.60 A"/>
    <property type="chains" value="A/B=103-268"/>
</dbReference>
<dbReference type="PDB" id="1CAQ">
    <property type="method" value="X-ray"/>
    <property type="resolution" value="1.80 A"/>
    <property type="chains" value="A=100-267"/>
</dbReference>
<dbReference type="PDB" id="1CIZ">
    <property type="method" value="X-ray"/>
    <property type="resolution" value="1.64 A"/>
    <property type="chains" value="A=100-267"/>
</dbReference>
<dbReference type="PDB" id="1CQR">
    <property type="method" value="X-ray"/>
    <property type="resolution" value="2.00 A"/>
    <property type="chains" value="A/B=100-272"/>
</dbReference>
<dbReference type="PDB" id="1D5J">
    <property type="method" value="X-ray"/>
    <property type="resolution" value="2.60 A"/>
    <property type="chains" value="A/B=100-272"/>
</dbReference>
<dbReference type="PDB" id="1D7X">
    <property type="method" value="X-ray"/>
    <property type="resolution" value="2.00 A"/>
    <property type="chains" value="A/B=100-272"/>
</dbReference>
<dbReference type="PDB" id="1D8F">
    <property type="method" value="X-ray"/>
    <property type="resolution" value="2.40 A"/>
    <property type="chains" value="A/B=100-272"/>
</dbReference>
<dbReference type="PDB" id="1D8M">
    <property type="method" value="X-ray"/>
    <property type="resolution" value="2.44 A"/>
    <property type="chains" value="A/B=100-272"/>
</dbReference>
<dbReference type="PDB" id="1G05">
    <property type="method" value="X-ray"/>
    <property type="resolution" value="2.45 A"/>
    <property type="chains" value="A/B=100-272"/>
</dbReference>
<dbReference type="PDB" id="1G49">
    <property type="method" value="X-ray"/>
    <property type="resolution" value="1.90 A"/>
    <property type="chains" value="A/B=100-272"/>
</dbReference>
<dbReference type="PDB" id="1G4K">
    <property type="method" value="X-ray"/>
    <property type="resolution" value="2.00 A"/>
    <property type="chains" value="A/B/C=100-267"/>
</dbReference>
<dbReference type="PDB" id="1HFS">
    <property type="method" value="X-ray"/>
    <property type="resolution" value="1.70 A"/>
    <property type="chains" value="A=105-264"/>
</dbReference>
<dbReference type="PDB" id="1HY7">
    <property type="method" value="X-ray"/>
    <property type="resolution" value="1.50 A"/>
    <property type="chains" value="A/B=100-272"/>
</dbReference>
<dbReference type="PDB" id="1OO9">
    <property type="method" value="NMR"/>
    <property type="chains" value="A=100-267"/>
</dbReference>
<dbReference type="PDB" id="1QIA">
    <property type="method" value="X-ray"/>
    <property type="resolution" value="2.00 A"/>
    <property type="chains" value="A/B/C/D=106-267"/>
</dbReference>
<dbReference type="PDB" id="1QIC">
    <property type="method" value="X-ray"/>
    <property type="resolution" value="2.00 A"/>
    <property type="chains" value="A/B/C/D=106-266"/>
</dbReference>
<dbReference type="PDB" id="1SLM">
    <property type="method" value="X-ray"/>
    <property type="resolution" value="1.90 A"/>
    <property type="chains" value="A=18-272"/>
</dbReference>
<dbReference type="PDB" id="1SLN">
    <property type="method" value="X-ray"/>
    <property type="resolution" value="2.27 A"/>
    <property type="chains" value="A=100-272"/>
</dbReference>
<dbReference type="PDB" id="1UEA">
    <property type="method" value="X-ray"/>
    <property type="resolution" value="2.80 A"/>
    <property type="chains" value="A/C=100-272"/>
</dbReference>
<dbReference type="PDB" id="1UMS">
    <property type="method" value="NMR"/>
    <property type="chains" value="A=100-273"/>
</dbReference>
<dbReference type="PDB" id="1UMT">
    <property type="method" value="NMR"/>
    <property type="chains" value="A=100-273"/>
</dbReference>
<dbReference type="PDB" id="1USN">
    <property type="method" value="X-ray"/>
    <property type="resolution" value="1.80 A"/>
    <property type="chains" value="A=100-264"/>
</dbReference>
<dbReference type="PDB" id="2D1O">
    <property type="method" value="X-ray"/>
    <property type="resolution" value="2.02 A"/>
    <property type="chains" value="A/B=100-270"/>
</dbReference>
<dbReference type="PDB" id="2JNP">
    <property type="method" value="NMR"/>
    <property type="chains" value="A=105-265"/>
</dbReference>
<dbReference type="PDB" id="2JT5">
    <property type="method" value="NMR"/>
    <property type="chains" value="A=105-265"/>
</dbReference>
<dbReference type="PDB" id="2JT6">
    <property type="method" value="NMR"/>
    <property type="chains" value="A=105-265"/>
</dbReference>
<dbReference type="PDB" id="2SRT">
    <property type="method" value="NMR"/>
    <property type="chains" value="A=100-272"/>
</dbReference>
<dbReference type="PDB" id="2USN">
    <property type="method" value="X-ray"/>
    <property type="resolution" value="2.20 A"/>
    <property type="chains" value="A=100-264"/>
</dbReference>
<dbReference type="PDB" id="3OHL">
    <property type="method" value="X-ray"/>
    <property type="resolution" value="2.36 A"/>
    <property type="chains" value="A=100-266"/>
</dbReference>
<dbReference type="PDB" id="3OHO">
    <property type="method" value="X-ray"/>
    <property type="resolution" value="2.50 A"/>
    <property type="chains" value="A=100-268"/>
</dbReference>
<dbReference type="PDB" id="3USN">
    <property type="method" value="NMR"/>
    <property type="chains" value="A=100-267"/>
</dbReference>
<dbReference type="PDB" id="4DPE">
    <property type="method" value="X-ray"/>
    <property type="resolution" value="1.96 A"/>
    <property type="chains" value="A/B=100-272"/>
</dbReference>
<dbReference type="PDB" id="4G9L">
    <property type="method" value="X-ray"/>
    <property type="resolution" value="1.88 A"/>
    <property type="chains" value="A/B=100-272"/>
</dbReference>
<dbReference type="PDB" id="4JA1">
    <property type="method" value="X-ray"/>
    <property type="resolution" value="1.96 A"/>
    <property type="chains" value="A/B=100-272"/>
</dbReference>
<dbReference type="PDB" id="6MAV">
    <property type="method" value="X-ray"/>
    <property type="resolution" value="2.37 A"/>
    <property type="chains" value="A=100-267"/>
</dbReference>
<dbReference type="PDB" id="6N9D">
    <property type="method" value="X-ray"/>
    <property type="resolution" value="2.67 A"/>
    <property type="chains" value="A=100-264"/>
</dbReference>
<dbReference type="PDB" id="7S7L">
    <property type="method" value="X-ray"/>
    <property type="resolution" value="2.34 A"/>
    <property type="chains" value="A=100-272"/>
</dbReference>
<dbReference type="PDB" id="7S7M">
    <property type="method" value="X-ray"/>
    <property type="resolution" value="3.00 A"/>
    <property type="chains" value="A=100-272"/>
</dbReference>
<dbReference type="PDBsum" id="1B3D"/>
<dbReference type="PDBsum" id="1B8Y"/>
<dbReference type="PDBsum" id="1BIW"/>
<dbReference type="PDBsum" id="1BM6"/>
<dbReference type="PDBsum" id="1BQO"/>
<dbReference type="PDBsum" id="1C3I"/>
<dbReference type="PDBsum" id="1C8T"/>
<dbReference type="PDBsum" id="1CAQ"/>
<dbReference type="PDBsum" id="1CIZ"/>
<dbReference type="PDBsum" id="1CQR"/>
<dbReference type="PDBsum" id="1D5J"/>
<dbReference type="PDBsum" id="1D7X"/>
<dbReference type="PDBsum" id="1D8F"/>
<dbReference type="PDBsum" id="1D8M"/>
<dbReference type="PDBsum" id="1G05"/>
<dbReference type="PDBsum" id="1G49"/>
<dbReference type="PDBsum" id="1G4K"/>
<dbReference type="PDBsum" id="1HFS"/>
<dbReference type="PDBsum" id="1HY7"/>
<dbReference type="PDBsum" id="1OO9"/>
<dbReference type="PDBsum" id="1QIA"/>
<dbReference type="PDBsum" id="1QIC"/>
<dbReference type="PDBsum" id="1SLM"/>
<dbReference type="PDBsum" id="1SLN"/>
<dbReference type="PDBsum" id="1UEA"/>
<dbReference type="PDBsum" id="1UMS"/>
<dbReference type="PDBsum" id="1UMT"/>
<dbReference type="PDBsum" id="1USN"/>
<dbReference type="PDBsum" id="2D1O"/>
<dbReference type="PDBsum" id="2JNP"/>
<dbReference type="PDBsum" id="2JT5"/>
<dbReference type="PDBsum" id="2JT6"/>
<dbReference type="PDBsum" id="2SRT"/>
<dbReference type="PDBsum" id="2USN"/>
<dbReference type="PDBsum" id="3OHL"/>
<dbReference type="PDBsum" id="3OHO"/>
<dbReference type="PDBsum" id="3USN"/>
<dbReference type="PDBsum" id="4DPE"/>
<dbReference type="PDBsum" id="4G9L"/>
<dbReference type="PDBsum" id="4JA1"/>
<dbReference type="PDBsum" id="6MAV"/>
<dbReference type="PDBsum" id="6N9D"/>
<dbReference type="PDBsum" id="7S7L"/>
<dbReference type="PDBsum" id="7S7M"/>
<dbReference type="BMRB" id="P08254"/>
<dbReference type="SMR" id="P08254"/>
<dbReference type="BioGRID" id="110458">
    <property type="interactions" value="26"/>
</dbReference>
<dbReference type="FunCoup" id="P08254">
    <property type="interactions" value="213"/>
</dbReference>
<dbReference type="IntAct" id="P08254">
    <property type="interactions" value="12"/>
</dbReference>
<dbReference type="MINT" id="P08254"/>
<dbReference type="STRING" id="9606.ENSP00000299855"/>
<dbReference type="BindingDB" id="P08254"/>
<dbReference type="ChEMBL" id="CHEMBL283"/>
<dbReference type="DrugBank" id="DB02367">
    <property type="generic name" value="(1n)-4-N-Butoxyphenylsulfonyl-(2r)-N-Hydroxycarboxamido-(4s)-Methanesulfonylamino-Pyrrolidine"/>
</dbReference>
<dbReference type="DrugBank" id="DB07145">
    <property type="generic name" value="(2R)-N-HYDROXY-2-[(3S)-3-METHYL-3-{4-[(2-METHYLQUINOLIN-4-YL)METHOXY]PHENYL}-2-OXOPYRROLIDIN-1-YL]PROPANAMIDE"/>
</dbReference>
<dbReference type="DrugBank" id="DB04140">
    <property type="generic name" value="1-Benzyl-3-(4-Methoxy-Benzenesulfonyl)-6-Oxo-Hexahydro-Pyrimidine-4-Carboxylic Acid Hydroxyamide"/>
</dbReference>
<dbReference type="DrugBank" id="DB08643">
    <property type="generic name" value="2-(2-{2-[(BIPHENYL-4-YLMETHYL)-AMINO]-3-MERCAPTO-PENTANOYLAMINO}-ACETYLAMINO)-3-METHYL-BUTYRIC ACID METHYL ESTER"/>
</dbReference>
<dbReference type="DrugBank" id="DB07390">
    <property type="generic name" value="2-[3-(5-Mercapto-[1,3,4]thiadiazol-2-yl)-ureido]-N-methyl-3-phenyl-propionamide"/>
</dbReference>
<dbReference type="DrugBank" id="DB07988">
    <property type="generic name" value="2-[3-(5-Mercapto-[1,3,4]thiadiazol-2yl)-ureido]-N-methyl-3-pentafluorophenyl-propionamide"/>
</dbReference>
<dbReference type="DrugBank" id="DB02449">
    <property type="generic name" value="3-(1h-Indol-3-Yl)-2-[4-(4-Phenyl-Piperidin-1-Yl)-Benzenesulfonylamino]-Propionic Acid"/>
</dbReference>
<dbReference type="DrugBank" id="DB08030">
    <property type="generic name" value="3-[(4'-cyanobiphenyl-4-yl)oxy]-N-hydroxypropanamide"/>
</dbReference>
<dbReference type="DrugBank" id="DB01996">
    <property type="generic name" value="3-Methylpyridine"/>
</dbReference>
<dbReference type="DrugBank" id="DB03033">
    <property type="generic name" value="4-methoxybenzenesulfinate"/>
</dbReference>
<dbReference type="DrugBank" id="DB03368">
    <property type="generic name" value="5-Methyl-5-(4-Phenoxy-Phenyl)-Pyrimidine-2,4,6-Trione"/>
</dbReference>
<dbReference type="DrugBank" id="DB07987">
    <property type="generic name" value="[2-(5-Mercapto-[1,3,4]thiadiazol-2-ylcarbamoyl)-1-phenyl-ethyl]-carbamic acid benzyl ester"/>
</dbReference>
<dbReference type="DrugBank" id="DB07986">
    <property type="generic name" value="[4-(4-PHENYL-PIPERIDIN-1-YL)-BENZENESULFONYLAMINO]-ACETIC ACID"/>
</dbReference>
<dbReference type="DrugBank" id="DB02090">
    <property type="generic name" value="A Disubstituted Succinyl Caprolactam Hydroxymate Mmp3inhibitor"/>
</dbReference>
<dbReference type="DrugBank" id="DB03880">
    <property type="generic name" value="Batimastat"/>
</dbReference>
<dbReference type="DrugBank" id="DB07556">
    <property type="generic name" value="CGS-27023"/>
</dbReference>
<dbReference type="DrugBank" id="DB08490">
    <property type="generic name" value="CTS-1027"/>
</dbReference>
<dbReference type="DrugBank" id="DB02697">
    <property type="generic name" value="Hydroxyaminovaline"/>
</dbReference>
<dbReference type="DrugBank" id="DB02255">
    <property type="generic name" value="Ilomastat"/>
</dbReference>
<dbReference type="DrugBank" id="DB00786">
    <property type="generic name" value="Marimastat"/>
</dbReference>
<dbReference type="DrugBank" id="DB07926">
    <property type="generic name" value="N-[3-(N'-HYDROXYCARBOXAMIDO)-2-(2-METHYLPROPYL)-PROPANOYL]-O-TYROSINE-N-METHYLAMIDE"/>
</dbReference>
<dbReference type="DrugBank" id="DB08507">
    <property type="generic name" value="N-[[2-METHYL-4-HYDROXYCARBAMOYL]BUT-4-YL-N]-BENZYL-P-[PHENYL]-P-[METHYL]PHOSPHINAMID"/>
</dbReference>
<dbReference type="DrugBank" id="DB01877">
    <property type="generic name" value="N-Hydroxy 1n(4-Methoxyphenyl)Sulfonyl-4-(Z,E-N-Methoxyimino)Pyrrolidine-2r-Carboxamide"/>
</dbReference>
<dbReference type="DrugBank" id="DB04232">
    <property type="generic name" value="N-Hydroxy-1-(4-Methoxyphenyl)Sulfonyl-4-Benzyloxycarbonyl-Piperazine-2-Carboxamide"/>
</dbReference>
<dbReference type="DrugBank" id="DB02350">
    <property type="generic name" value="N-Hydroxy-4-[(4-Methoxylphenyl)Sulfonyl]-2,2-Dimethyl-Hexahydro-1,4-Thiazepine-3(S)-Carboxamide"/>
</dbReference>
<dbReference type="DrugBank" id="DB08271">
    <property type="generic name" value="N-ISOBUTYL-N-[4-METHOXYPHENYLSULFONYL]GLYCYL HYDROXAMIC ACID"/>
</dbReference>
<dbReference type="DrugBank" id="DB08029">
    <property type="generic name" value="N~2~-(biphenyl-4-ylsulfonyl)-N-hydroxy-N~2~-(2-hydroxyethyl)glycinamide"/>
</dbReference>
<dbReference type="DrugBank" id="DB05495">
    <property type="generic name" value="PG-530742"/>
</dbReference>
<dbReference type="DrugBank" id="DB04416">
    <property type="generic name" value="R-2-{[4'-Methoxy-(1,1'-Biphenyl)-4-Yl]-Sulfonyl}-Amino-6-Methoxy-Hex-4-Ynoic Acid"/>
</dbReference>
<dbReference type="DrugCentral" id="P08254"/>
<dbReference type="GuidetoPHARMACOLOGY" id="1630"/>
<dbReference type="MEROPS" id="M10.005"/>
<dbReference type="MoonProt" id="P08254"/>
<dbReference type="GlyCosmos" id="P08254">
    <property type="glycosylation" value="2 sites, 1 glycan"/>
</dbReference>
<dbReference type="GlyGen" id="P08254">
    <property type="glycosylation" value="2 sites, 1 O-linked glycan (2 sites)"/>
</dbReference>
<dbReference type="iPTMnet" id="P08254"/>
<dbReference type="PhosphoSitePlus" id="P08254"/>
<dbReference type="BioMuta" id="MMP3"/>
<dbReference type="DMDM" id="116857"/>
<dbReference type="jPOST" id="P08254"/>
<dbReference type="MassIVE" id="P08254"/>
<dbReference type="PaxDb" id="9606-ENSP00000299855"/>
<dbReference type="PeptideAtlas" id="P08254"/>
<dbReference type="ProteomicsDB" id="52102"/>
<dbReference type="ABCD" id="P08254">
    <property type="antibodies" value="1 sequenced antibody"/>
</dbReference>
<dbReference type="Antibodypedia" id="1509">
    <property type="antibodies" value="1418 antibodies from 50 providers"/>
</dbReference>
<dbReference type="DNASU" id="4314"/>
<dbReference type="Ensembl" id="ENST00000299855.10">
    <property type="protein sequence ID" value="ENSP00000299855.5"/>
    <property type="gene ID" value="ENSG00000149968.12"/>
</dbReference>
<dbReference type="GeneID" id="4314"/>
<dbReference type="KEGG" id="hsa:4314"/>
<dbReference type="MANE-Select" id="ENST00000299855.10">
    <property type="protein sequence ID" value="ENSP00000299855.5"/>
    <property type="RefSeq nucleotide sequence ID" value="NM_002422.5"/>
    <property type="RefSeq protein sequence ID" value="NP_002413.1"/>
</dbReference>
<dbReference type="UCSC" id="uc001phj.2">
    <property type="organism name" value="human"/>
</dbReference>
<dbReference type="AGR" id="HGNC:7173"/>
<dbReference type="CTD" id="4314"/>
<dbReference type="DisGeNET" id="4314"/>
<dbReference type="GeneCards" id="MMP3"/>
<dbReference type="HGNC" id="HGNC:7173">
    <property type="gene designation" value="MMP3"/>
</dbReference>
<dbReference type="HPA" id="ENSG00000149968">
    <property type="expression patterns" value="Tissue enhanced (adipose tissue, salivary gland)"/>
</dbReference>
<dbReference type="MalaCards" id="MMP3"/>
<dbReference type="MIM" id="185250">
    <property type="type" value="gene"/>
</dbReference>
<dbReference type="MIM" id="614466">
    <property type="type" value="phenotype"/>
</dbReference>
<dbReference type="neXtProt" id="NX_P08254"/>
<dbReference type="OpenTargets" id="ENSG00000149968"/>
<dbReference type="PharmGKB" id="PA30886"/>
<dbReference type="VEuPathDB" id="HostDB:ENSG00000149968"/>
<dbReference type="eggNOG" id="KOG1565">
    <property type="taxonomic scope" value="Eukaryota"/>
</dbReference>
<dbReference type="GeneTree" id="ENSGT00940000159759"/>
<dbReference type="HOGENOM" id="CLU_015489_6_0_1"/>
<dbReference type="InParanoid" id="P08254"/>
<dbReference type="OMA" id="NFVQQYL"/>
<dbReference type="OrthoDB" id="406838at2759"/>
<dbReference type="PAN-GO" id="P08254">
    <property type="GO annotations" value="3 GO annotations based on evolutionary models"/>
</dbReference>
<dbReference type="PhylomeDB" id="P08254"/>
<dbReference type="TreeFam" id="TF315428"/>
<dbReference type="BRENDA" id="3.4.24.17">
    <property type="organism ID" value="2681"/>
</dbReference>
<dbReference type="PathwayCommons" id="P08254"/>
<dbReference type="Reactome" id="R-HSA-1442490">
    <property type="pathway name" value="Collagen degradation"/>
</dbReference>
<dbReference type="Reactome" id="R-HSA-1474228">
    <property type="pathway name" value="Degradation of the extracellular matrix"/>
</dbReference>
<dbReference type="Reactome" id="R-HSA-1592389">
    <property type="pathway name" value="Activation of Matrix Metalloproteinases"/>
</dbReference>
<dbReference type="Reactome" id="R-HSA-2022090">
    <property type="pathway name" value="Assembly of collagen fibrils and other multimeric structures"/>
</dbReference>
<dbReference type="Reactome" id="R-HSA-2179392">
    <property type="pathway name" value="EGFR Transactivation by Gastrin"/>
</dbReference>
<dbReference type="Reactome" id="R-HSA-6785807">
    <property type="pathway name" value="Interleukin-4 and Interleukin-13 signaling"/>
</dbReference>
<dbReference type="Reactome" id="R-HSA-9009391">
    <property type="pathway name" value="Extra-nuclear estrogen signaling"/>
</dbReference>
<dbReference type="SignaLink" id="P08254"/>
<dbReference type="SIGNOR" id="P08254"/>
<dbReference type="BioGRID-ORCS" id="4314">
    <property type="hits" value="13 hits in 1160 CRISPR screens"/>
</dbReference>
<dbReference type="ChiTaRS" id="MMP3">
    <property type="organism name" value="human"/>
</dbReference>
<dbReference type="EvolutionaryTrace" id="P08254"/>
<dbReference type="GeneWiki" id="MMP3"/>
<dbReference type="GenomeRNAi" id="4314"/>
<dbReference type="Pharos" id="P08254">
    <property type="development level" value="Tchem"/>
</dbReference>
<dbReference type="PRO" id="PR:P08254"/>
<dbReference type="Proteomes" id="UP000005640">
    <property type="component" value="Chromosome 11"/>
</dbReference>
<dbReference type="RNAct" id="P08254">
    <property type="molecule type" value="protein"/>
</dbReference>
<dbReference type="Bgee" id="ENSG00000149968">
    <property type="expression patterns" value="Expressed in calcaneal tendon and 120 other cell types or tissues"/>
</dbReference>
<dbReference type="ExpressionAtlas" id="P08254">
    <property type="expression patterns" value="baseline and differential"/>
</dbReference>
<dbReference type="GO" id="GO:0005829">
    <property type="term" value="C:cytosol"/>
    <property type="evidence" value="ECO:0007669"/>
    <property type="project" value="Ensembl"/>
</dbReference>
<dbReference type="GO" id="GO:0031012">
    <property type="term" value="C:extracellular matrix"/>
    <property type="evidence" value="ECO:0007669"/>
    <property type="project" value="InterPro"/>
</dbReference>
<dbReference type="GO" id="GO:0005576">
    <property type="term" value="C:extracellular region"/>
    <property type="evidence" value="ECO:0000304"/>
    <property type="project" value="Reactome"/>
</dbReference>
<dbReference type="GO" id="GO:0005615">
    <property type="term" value="C:extracellular space"/>
    <property type="evidence" value="ECO:0000304"/>
    <property type="project" value="ProtInc"/>
</dbReference>
<dbReference type="GO" id="GO:0005739">
    <property type="term" value="C:mitochondrion"/>
    <property type="evidence" value="ECO:0007669"/>
    <property type="project" value="Ensembl"/>
</dbReference>
<dbReference type="GO" id="GO:0005634">
    <property type="term" value="C:nucleus"/>
    <property type="evidence" value="ECO:0007669"/>
    <property type="project" value="UniProtKB-SubCell"/>
</dbReference>
<dbReference type="GO" id="GO:0004175">
    <property type="term" value="F:endopeptidase activity"/>
    <property type="evidence" value="ECO:0000314"/>
    <property type="project" value="ParkinsonsUK-UCL"/>
</dbReference>
<dbReference type="GO" id="GO:0004222">
    <property type="term" value="F:metalloendopeptidase activity"/>
    <property type="evidence" value="ECO:0000318"/>
    <property type="project" value="GO_Central"/>
</dbReference>
<dbReference type="GO" id="GO:0008237">
    <property type="term" value="F:metallopeptidase activity"/>
    <property type="evidence" value="ECO:0000314"/>
    <property type="project" value="UniProtKB"/>
</dbReference>
<dbReference type="GO" id="GO:0008233">
    <property type="term" value="F:peptidase activity"/>
    <property type="evidence" value="ECO:0000314"/>
    <property type="project" value="UniProtKB"/>
</dbReference>
<dbReference type="GO" id="GO:0004252">
    <property type="term" value="F:serine-type endopeptidase activity"/>
    <property type="evidence" value="ECO:0000304"/>
    <property type="project" value="Reactome"/>
</dbReference>
<dbReference type="GO" id="GO:0008270">
    <property type="term" value="F:zinc ion binding"/>
    <property type="evidence" value="ECO:0007669"/>
    <property type="project" value="InterPro"/>
</dbReference>
<dbReference type="GO" id="GO:0071230">
    <property type="term" value="P:cellular response to amino acid stimulus"/>
    <property type="evidence" value="ECO:0007669"/>
    <property type="project" value="Ensembl"/>
</dbReference>
<dbReference type="GO" id="GO:0071222">
    <property type="term" value="P:cellular response to lipopolysaccharide"/>
    <property type="evidence" value="ECO:0000304"/>
    <property type="project" value="ARUK-UCL"/>
</dbReference>
<dbReference type="GO" id="GO:0071732">
    <property type="term" value="P:cellular response to nitric oxide"/>
    <property type="evidence" value="ECO:0000304"/>
    <property type="project" value="ParkinsonsUK-UCL"/>
</dbReference>
<dbReference type="GO" id="GO:0034614">
    <property type="term" value="P:cellular response to reactive oxygen species"/>
    <property type="evidence" value="ECO:0000250"/>
    <property type="project" value="ParkinsonsUK-UCL"/>
</dbReference>
<dbReference type="GO" id="GO:0071492">
    <property type="term" value="P:cellular response to UV-A"/>
    <property type="evidence" value="ECO:0000314"/>
    <property type="project" value="UniProtKB"/>
</dbReference>
<dbReference type="GO" id="GO:0030574">
    <property type="term" value="P:collagen catabolic process"/>
    <property type="evidence" value="ECO:0000318"/>
    <property type="project" value="GO_Central"/>
</dbReference>
<dbReference type="GO" id="GO:0022617">
    <property type="term" value="P:extracellular matrix disassembly"/>
    <property type="evidence" value="ECO:0000304"/>
    <property type="project" value="Reactome"/>
</dbReference>
<dbReference type="GO" id="GO:0030198">
    <property type="term" value="P:extracellular matrix organization"/>
    <property type="evidence" value="ECO:0000318"/>
    <property type="project" value="GO_Central"/>
</dbReference>
<dbReference type="GO" id="GO:0045087">
    <property type="term" value="P:innate immune response"/>
    <property type="evidence" value="ECO:0007669"/>
    <property type="project" value="UniProtKB-KW"/>
</dbReference>
<dbReference type="GO" id="GO:0051898">
    <property type="term" value="P:negative regulation of phosphatidylinositol 3-kinase/protein kinase B signal transduction"/>
    <property type="evidence" value="ECO:0007669"/>
    <property type="project" value="Ensembl"/>
</dbReference>
<dbReference type="GO" id="GO:2000378">
    <property type="term" value="P:negative regulation of reactive oxygen species metabolic process"/>
    <property type="evidence" value="ECO:0000314"/>
    <property type="project" value="ParkinsonsUK-UCL"/>
</dbReference>
<dbReference type="GO" id="GO:0031334">
    <property type="term" value="P:positive regulation of protein-containing complex assembly"/>
    <property type="evidence" value="ECO:0000314"/>
    <property type="project" value="ParkinsonsUK-UCL"/>
</dbReference>
<dbReference type="GO" id="GO:0030163">
    <property type="term" value="P:protein catabolic process"/>
    <property type="evidence" value="ECO:0007669"/>
    <property type="project" value="Ensembl"/>
</dbReference>
<dbReference type="GO" id="GO:0006508">
    <property type="term" value="P:proteolysis"/>
    <property type="evidence" value="ECO:0000314"/>
    <property type="project" value="UniProtKB"/>
</dbReference>
<dbReference type="GO" id="GO:0030334">
    <property type="term" value="P:regulation of cell migration"/>
    <property type="evidence" value="ECO:0007669"/>
    <property type="project" value="Ensembl"/>
</dbReference>
<dbReference type="GO" id="GO:0150077">
    <property type="term" value="P:regulation of neuroinflammatory response"/>
    <property type="evidence" value="ECO:0000304"/>
    <property type="project" value="ARUK-UCL"/>
</dbReference>
<dbReference type="GO" id="GO:1904645">
    <property type="term" value="P:response to amyloid-beta"/>
    <property type="evidence" value="ECO:0000304"/>
    <property type="project" value="ARUK-UCL"/>
</dbReference>
<dbReference type="CDD" id="cd00094">
    <property type="entry name" value="HX"/>
    <property type="match status" value="1"/>
</dbReference>
<dbReference type="CDD" id="cd04278">
    <property type="entry name" value="ZnMc_MMP"/>
    <property type="match status" value="1"/>
</dbReference>
<dbReference type="FunFam" id="3.40.390.10:FF:000007">
    <property type="entry name" value="Collagenase 3"/>
    <property type="match status" value="1"/>
</dbReference>
<dbReference type="FunFam" id="2.110.10.10:FF:000002">
    <property type="entry name" value="Matrix metallopeptidase 3"/>
    <property type="match status" value="1"/>
</dbReference>
<dbReference type="Gene3D" id="3.40.390.10">
    <property type="entry name" value="Collagenase (Catalytic Domain)"/>
    <property type="match status" value="1"/>
</dbReference>
<dbReference type="Gene3D" id="2.110.10.10">
    <property type="entry name" value="Hemopexin-like domain"/>
    <property type="match status" value="1"/>
</dbReference>
<dbReference type="InterPro" id="IPR000585">
    <property type="entry name" value="Hemopexin-like_dom"/>
</dbReference>
<dbReference type="InterPro" id="IPR036375">
    <property type="entry name" value="Hemopexin-like_dom_sf"/>
</dbReference>
<dbReference type="InterPro" id="IPR018487">
    <property type="entry name" value="Hemopexin-like_repeat"/>
</dbReference>
<dbReference type="InterPro" id="IPR018486">
    <property type="entry name" value="Hemopexin_CS"/>
</dbReference>
<dbReference type="InterPro" id="IPR033739">
    <property type="entry name" value="M10A_MMP"/>
</dbReference>
<dbReference type="InterPro" id="IPR024079">
    <property type="entry name" value="MetalloPept_cat_dom_sf"/>
</dbReference>
<dbReference type="InterPro" id="IPR001818">
    <property type="entry name" value="Pept_M10_metallopeptidase"/>
</dbReference>
<dbReference type="InterPro" id="IPR021190">
    <property type="entry name" value="Pept_M10A"/>
</dbReference>
<dbReference type="InterPro" id="IPR021158">
    <property type="entry name" value="Pept_M10A_Zn_BS"/>
</dbReference>
<dbReference type="InterPro" id="IPR006026">
    <property type="entry name" value="Peptidase_Metallo"/>
</dbReference>
<dbReference type="InterPro" id="IPR002477">
    <property type="entry name" value="Peptidoglycan-bd-like"/>
</dbReference>
<dbReference type="InterPro" id="IPR036365">
    <property type="entry name" value="PGBD-like_sf"/>
</dbReference>
<dbReference type="PANTHER" id="PTHR10201">
    <property type="entry name" value="MATRIX METALLOPROTEINASE"/>
    <property type="match status" value="1"/>
</dbReference>
<dbReference type="PANTHER" id="PTHR10201:SF215">
    <property type="entry name" value="STROMELYSIN-1"/>
    <property type="match status" value="1"/>
</dbReference>
<dbReference type="Pfam" id="PF00045">
    <property type="entry name" value="Hemopexin"/>
    <property type="match status" value="4"/>
</dbReference>
<dbReference type="Pfam" id="PF00413">
    <property type="entry name" value="Peptidase_M10"/>
    <property type="match status" value="1"/>
</dbReference>
<dbReference type="Pfam" id="PF01471">
    <property type="entry name" value="PG_binding_1"/>
    <property type="match status" value="1"/>
</dbReference>
<dbReference type="PIRSF" id="PIRSF001191">
    <property type="entry name" value="Peptidase_M10A_matrix"/>
    <property type="match status" value="1"/>
</dbReference>
<dbReference type="PRINTS" id="PR00138">
    <property type="entry name" value="MATRIXIN"/>
</dbReference>
<dbReference type="SMART" id="SM00120">
    <property type="entry name" value="HX"/>
    <property type="match status" value="4"/>
</dbReference>
<dbReference type="SMART" id="SM00235">
    <property type="entry name" value="ZnMc"/>
    <property type="match status" value="1"/>
</dbReference>
<dbReference type="SUPFAM" id="SSF50923">
    <property type="entry name" value="Hemopexin-like domain"/>
    <property type="match status" value="1"/>
</dbReference>
<dbReference type="SUPFAM" id="SSF55486">
    <property type="entry name" value="Metalloproteases ('zincins'), catalytic domain"/>
    <property type="match status" value="1"/>
</dbReference>
<dbReference type="SUPFAM" id="SSF47090">
    <property type="entry name" value="PGBD-like"/>
    <property type="match status" value="1"/>
</dbReference>
<dbReference type="PROSITE" id="PS00546">
    <property type="entry name" value="CYSTEINE_SWITCH"/>
    <property type="match status" value="1"/>
</dbReference>
<dbReference type="PROSITE" id="PS00024">
    <property type="entry name" value="HEMOPEXIN"/>
    <property type="match status" value="1"/>
</dbReference>
<dbReference type="PROSITE" id="PS51642">
    <property type="entry name" value="HEMOPEXIN_2"/>
    <property type="match status" value="4"/>
</dbReference>
<dbReference type="PROSITE" id="PS00142">
    <property type="entry name" value="ZINC_PROTEASE"/>
    <property type="match status" value="1"/>
</dbReference>
<accession>P08254</accession>
<accession>B2R8B8</accession>
<accession>Q3B7S0</accession>
<accession>Q6GRF8</accession>
<name>MMP3_HUMAN</name>
<gene>
    <name type="primary">MMP3</name>
    <name type="synonym">STMY1</name>
</gene>
<protein>
    <recommendedName>
        <fullName>Stromelysin-1</fullName>
        <shortName>SL-1</shortName>
        <ecNumber evidence="5 7">3.4.24.17</ecNumber>
    </recommendedName>
    <alternativeName>
        <fullName>Matrix metalloproteinase-3</fullName>
        <shortName>MMP-3</shortName>
    </alternativeName>
    <alternativeName>
        <fullName>Transin-1</fullName>
    </alternativeName>
</protein>
<feature type="signal peptide" evidence="16">
    <location>
        <begin position="1"/>
        <end position="17"/>
    </location>
</feature>
<feature type="propeptide" id="PRO_0000028728" description="Activation peptide">
    <location>
        <begin position="18"/>
        <end position="99"/>
    </location>
</feature>
<feature type="chain" id="PRO_0000028729" description="Stromelysin-1">
    <location>
        <begin position="100"/>
        <end position="477"/>
    </location>
</feature>
<feature type="repeat" description="Hemopexin 1">
    <location>
        <begin position="287"/>
        <end position="336"/>
    </location>
</feature>
<feature type="repeat" description="Hemopexin 2">
    <location>
        <begin position="337"/>
        <end position="383"/>
    </location>
</feature>
<feature type="repeat" description="Hemopexin 3">
    <location>
        <begin position="385"/>
        <end position="433"/>
    </location>
</feature>
<feature type="repeat" description="Hemopexin 4">
    <location>
        <begin position="434"/>
        <end position="477"/>
    </location>
</feature>
<feature type="region of interest" description="Disordered" evidence="2">
    <location>
        <begin position="262"/>
        <end position="287"/>
    </location>
</feature>
<feature type="short sequence motif" description="Cysteine switch" evidence="1">
    <location>
        <begin position="90"/>
        <end position="97"/>
    </location>
</feature>
<feature type="compositionally biased region" description="Pro residues" evidence="2">
    <location>
        <begin position="276"/>
        <end position="285"/>
    </location>
</feature>
<feature type="active site">
    <location>
        <position position="219"/>
    </location>
</feature>
<feature type="binding site" description="in inhibited form">
    <location>
        <position position="92"/>
    </location>
    <ligand>
        <name>Zn(2+)</name>
        <dbReference type="ChEBI" id="CHEBI:29105"/>
        <label>2</label>
        <note>catalytic</note>
    </ligand>
</feature>
<feature type="binding site">
    <location>
        <position position="124"/>
    </location>
    <ligand>
        <name>Ca(2+)</name>
        <dbReference type="ChEBI" id="CHEBI:29108"/>
        <label>1</label>
    </ligand>
</feature>
<feature type="binding site">
    <location>
        <position position="158"/>
    </location>
    <ligand>
        <name>Ca(2+)</name>
        <dbReference type="ChEBI" id="CHEBI:29108"/>
        <label>2</label>
    </ligand>
</feature>
<feature type="binding site">
    <location>
        <position position="168"/>
    </location>
    <ligand>
        <name>Zn(2+)</name>
        <dbReference type="ChEBI" id="CHEBI:29105"/>
        <label>1</label>
    </ligand>
</feature>
<feature type="binding site">
    <location>
        <position position="170"/>
    </location>
    <ligand>
        <name>Zn(2+)</name>
        <dbReference type="ChEBI" id="CHEBI:29105"/>
        <label>1</label>
    </ligand>
</feature>
<feature type="binding site">
    <location>
        <position position="175"/>
    </location>
    <ligand>
        <name>Ca(2+)</name>
        <dbReference type="ChEBI" id="CHEBI:29108"/>
        <label>3</label>
    </ligand>
</feature>
<feature type="binding site">
    <location>
        <position position="176"/>
    </location>
    <ligand>
        <name>Ca(2+)</name>
        <dbReference type="ChEBI" id="CHEBI:29108"/>
        <label>3</label>
    </ligand>
</feature>
<feature type="binding site">
    <location>
        <position position="178"/>
    </location>
    <ligand>
        <name>Ca(2+)</name>
        <dbReference type="ChEBI" id="CHEBI:29108"/>
        <label>3</label>
    </ligand>
</feature>
<feature type="binding site">
    <location>
        <position position="180"/>
    </location>
    <ligand>
        <name>Ca(2+)</name>
        <dbReference type="ChEBI" id="CHEBI:29108"/>
        <label>3</label>
    </ligand>
</feature>
<feature type="binding site">
    <location>
        <position position="183"/>
    </location>
    <ligand>
        <name>Zn(2+)</name>
        <dbReference type="ChEBI" id="CHEBI:29105"/>
        <label>1</label>
    </ligand>
</feature>
<feature type="binding site">
    <location>
        <position position="190"/>
    </location>
    <ligand>
        <name>Ca(2+)</name>
        <dbReference type="ChEBI" id="CHEBI:29108"/>
        <label>2</label>
    </ligand>
</feature>
<feature type="binding site">
    <location>
        <position position="192"/>
    </location>
    <ligand>
        <name>Ca(2+)</name>
        <dbReference type="ChEBI" id="CHEBI:29108"/>
        <label>2</label>
    </ligand>
</feature>
<feature type="binding site">
    <location>
        <position position="194"/>
    </location>
    <ligand>
        <name>Ca(2+)</name>
        <dbReference type="ChEBI" id="CHEBI:29108"/>
        <label>2</label>
    </ligand>
</feature>
<feature type="binding site">
    <location>
        <position position="196"/>
    </location>
    <ligand>
        <name>Zn(2+)</name>
        <dbReference type="ChEBI" id="CHEBI:29105"/>
        <label>1</label>
    </ligand>
</feature>
<feature type="binding site">
    <location>
        <position position="198"/>
    </location>
    <ligand>
        <name>Ca(2+)</name>
        <dbReference type="ChEBI" id="CHEBI:29108"/>
        <label>3</label>
    </ligand>
</feature>
<feature type="binding site">
    <location>
        <position position="199"/>
    </location>
    <ligand>
        <name>Ca(2+)</name>
        <dbReference type="ChEBI" id="CHEBI:29108"/>
        <label>1</label>
    </ligand>
</feature>
<feature type="binding site">
    <location>
        <position position="201"/>
    </location>
    <ligand>
        <name>Ca(2+)</name>
        <dbReference type="ChEBI" id="CHEBI:29108"/>
        <label>1</label>
    </ligand>
</feature>
<feature type="binding site">
    <location>
        <position position="201"/>
    </location>
    <ligand>
        <name>Ca(2+)</name>
        <dbReference type="ChEBI" id="CHEBI:29108"/>
        <label>3</label>
    </ligand>
</feature>
<feature type="binding site" evidence="12">
    <location>
        <position position="218"/>
    </location>
    <ligand>
        <name>Zn(2+)</name>
        <dbReference type="ChEBI" id="CHEBI:29105"/>
        <label>2</label>
        <note>catalytic</note>
    </ligand>
</feature>
<feature type="binding site" evidence="12">
    <location>
        <position position="222"/>
    </location>
    <ligand>
        <name>Zn(2+)</name>
        <dbReference type="ChEBI" id="CHEBI:29105"/>
        <label>2</label>
        <note>catalytic</note>
    </ligand>
</feature>
<feature type="binding site" evidence="12">
    <location>
        <position position="228"/>
    </location>
    <ligand>
        <name>Zn(2+)</name>
        <dbReference type="ChEBI" id="CHEBI:29105"/>
        <label>2</label>
        <note>catalytic</note>
    </ligand>
</feature>
<feature type="binding site" evidence="1">
    <location>
        <position position="297"/>
    </location>
    <ligand>
        <name>Ca(2+)</name>
        <dbReference type="ChEBI" id="CHEBI:29108"/>
        <label>4</label>
    </ligand>
</feature>
<feature type="binding site" evidence="1">
    <location>
        <position position="389"/>
    </location>
    <ligand>
        <name>Ca(2+)</name>
        <dbReference type="ChEBI" id="CHEBI:29108"/>
        <label>4</label>
    </ligand>
</feature>
<feature type="binding site" evidence="1">
    <location>
        <position position="438"/>
    </location>
    <ligand>
        <name>Ca(2+)</name>
        <dbReference type="ChEBI" id="CHEBI:29108"/>
        <label>4</label>
    </ligand>
</feature>
<feature type="disulfide bond" evidence="1">
    <location>
        <begin position="290"/>
        <end position="477"/>
    </location>
</feature>
<feature type="sequence variant" id="VAR_013090" description="In dbSNP:rs679620." evidence="6 13 14">
    <original>K</original>
    <variation>E</variation>
    <location>
        <position position="45"/>
    </location>
</feature>
<feature type="sequence conflict" description="In Ref. 3." evidence="15" ref="3">
    <original>P</original>
    <variation>L</variation>
    <location>
        <position position="420"/>
    </location>
</feature>
<feature type="helix" evidence="20">
    <location>
        <begin position="34"/>
        <end position="41"/>
    </location>
</feature>
<feature type="helix" evidence="20">
    <location>
        <begin position="58"/>
        <end position="70"/>
    </location>
</feature>
<feature type="helix" evidence="20">
    <location>
        <begin position="81"/>
        <end position="86"/>
    </location>
</feature>
<feature type="strand" evidence="20">
    <location>
        <begin position="96"/>
        <end position="98"/>
    </location>
</feature>
<feature type="strand" evidence="24">
    <location>
        <begin position="102"/>
        <end position="104"/>
    </location>
</feature>
<feature type="strand" evidence="19">
    <location>
        <begin position="110"/>
        <end position="118"/>
    </location>
</feature>
<feature type="strand" evidence="17">
    <location>
        <begin position="123"/>
        <end position="125"/>
    </location>
</feature>
<feature type="helix" evidence="19">
    <location>
        <begin position="127"/>
        <end position="142"/>
    </location>
</feature>
<feature type="strand" evidence="22">
    <location>
        <begin position="144"/>
        <end position="146"/>
    </location>
</feature>
<feature type="strand" evidence="19">
    <location>
        <begin position="148"/>
        <end position="151"/>
    </location>
</feature>
<feature type="strand" evidence="19">
    <location>
        <begin position="153"/>
        <end position="155"/>
    </location>
</feature>
<feature type="strand" evidence="19">
    <location>
        <begin position="158"/>
        <end position="164"/>
    </location>
</feature>
<feature type="strand" evidence="19">
    <location>
        <begin position="169"/>
        <end position="171"/>
    </location>
</feature>
<feature type="strand" evidence="19">
    <location>
        <begin position="176"/>
        <end position="179"/>
    </location>
</feature>
<feature type="strand" evidence="19">
    <location>
        <begin position="182"/>
        <end position="184"/>
    </location>
</feature>
<feature type="strand" evidence="19">
    <location>
        <begin position="187"/>
        <end position="189"/>
    </location>
</feature>
<feature type="turn" evidence="19">
    <location>
        <begin position="190"/>
        <end position="193"/>
    </location>
</feature>
<feature type="strand" evidence="19">
    <location>
        <begin position="195"/>
        <end position="198"/>
    </location>
</feature>
<feature type="strand" evidence="22">
    <location>
        <begin position="199"/>
        <end position="201"/>
    </location>
</feature>
<feature type="strand" evidence="19">
    <location>
        <begin position="203"/>
        <end position="211"/>
    </location>
</feature>
<feature type="helix" evidence="19">
    <location>
        <begin position="212"/>
        <end position="223"/>
    </location>
</feature>
<feature type="strand" evidence="23">
    <location>
        <begin position="232"/>
        <end position="234"/>
    </location>
</feature>
<feature type="strand" evidence="20">
    <location>
        <begin position="237"/>
        <end position="239"/>
    </location>
</feature>
<feature type="helix" evidence="21">
    <location>
        <begin position="240"/>
        <end position="243"/>
    </location>
</feature>
<feature type="helix" evidence="18">
    <location>
        <begin position="246"/>
        <end position="248"/>
    </location>
</feature>
<feature type="helix" evidence="19">
    <location>
        <begin position="253"/>
        <end position="263"/>
    </location>
</feature>
<organism>
    <name type="scientific">Homo sapiens</name>
    <name type="common">Human</name>
    <dbReference type="NCBI Taxonomy" id="9606"/>
    <lineage>
        <taxon>Eukaryota</taxon>
        <taxon>Metazoa</taxon>
        <taxon>Chordata</taxon>
        <taxon>Craniata</taxon>
        <taxon>Vertebrata</taxon>
        <taxon>Euteleostomi</taxon>
        <taxon>Mammalia</taxon>
        <taxon>Eutheria</taxon>
        <taxon>Euarchontoglires</taxon>
        <taxon>Primates</taxon>
        <taxon>Haplorrhini</taxon>
        <taxon>Catarrhini</taxon>
        <taxon>Hominidae</taxon>
        <taxon>Homo</taxon>
    </lineage>
</organism>